<reference key="1">
    <citation type="journal article" date="2007" name="Appl. Environ. Microbiol.">
        <title>Genome sequence of the cellulolytic gliding bacterium Cytophaga hutchinsonii.</title>
        <authorList>
            <person name="Xie G."/>
            <person name="Bruce D.C."/>
            <person name="Challacombe J.F."/>
            <person name="Chertkov O."/>
            <person name="Detter J.C."/>
            <person name="Gilna P."/>
            <person name="Han C.S."/>
            <person name="Lucas S."/>
            <person name="Misra M."/>
            <person name="Myers G.L."/>
            <person name="Richardson P."/>
            <person name="Tapia R."/>
            <person name="Thayer N."/>
            <person name="Thompson L.S."/>
            <person name="Brettin T.S."/>
            <person name="Henrissat B."/>
            <person name="Wilson D.B."/>
            <person name="McBride M.J."/>
        </authorList>
    </citation>
    <scope>NUCLEOTIDE SEQUENCE [LARGE SCALE GENOMIC DNA]</scope>
    <source>
        <strain>ATCC 33406 / DSM 1761 / JCM 20678 / CIP 103989 / IAM 12607 / NBRC 15051 / NCIMB 9469 / D465</strain>
    </source>
</reference>
<reference key="2">
    <citation type="journal article" date="2012" name="Proc. Natl. Acad. Sci. U.S.A.">
        <title>Homology models guide discovery of diverse enzyme specificities among dipeptide epimerases in the enolase superfamily.</title>
        <authorList>
            <person name="Lukk T."/>
            <person name="Sakai A."/>
            <person name="Kalyanaraman C."/>
            <person name="Brown S.D."/>
            <person name="Imker H.J."/>
            <person name="Song L."/>
            <person name="Fedorov A.A."/>
            <person name="Fedorov E.V."/>
            <person name="Toro R."/>
            <person name="Hillerich B."/>
            <person name="Seidel R."/>
            <person name="Patskovsky Y."/>
            <person name="Vetting M.W."/>
            <person name="Nair S.K."/>
            <person name="Babbitt P.C."/>
            <person name="Almo S.C."/>
            <person name="Gerlt J.A."/>
            <person name="Jacobson M.P."/>
        </authorList>
    </citation>
    <scope>X-RAY CRYSTALLOGRAPHY (3.00 ANGSTROMS) IN COMPLEXES WITH MAGNESIUM; D-ALA-L-VAL AND D-ALA-L-ALA</scope>
    <scope>FUNCTION</scope>
    <scope>COFACTOR</scope>
    <scope>BIOPHYSICOCHEMICAL PROPERTIES</scope>
    <source>
        <strain>ATCC 33406 / DSM 1761 / JCM 20678 / CIP 103989 / IAM 12607 / NBRC 15051 / NCIMB 9469 / D465</strain>
    </source>
</reference>
<comment type="function">
    <text evidence="1">Catalyzes the epimerization of D-Ala-D-Ala to D-Ala-L-Ala. Has broad substrate specificity and catalyzes the epimerization of a variety of dipeptides containing an N-terminal Ala followed by a hydrophobic or polar residue, such as Val, Ser and Met (in vitro).</text>
</comment>
<comment type="cofactor">
    <cofactor evidence="1">
        <name>Mg(2+)</name>
        <dbReference type="ChEBI" id="CHEBI:18420"/>
    </cofactor>
    <text evidence="1">Binds 1 Mg(2+) ion per subunit.</text>
</comment>
<comment type="biophysicochemical properties">
    <kinetics>
        <KM evidence="1">1.1 mM for D-Ala-L-Ala</KM>
        <KM evidence="1">1.9 mM for D-Ala-D-Ala</KM>
        <KM evidence="1">0.5 mM for D-Ala-L-Val</KM>
        <KM evidence="1">5 mM for L-Ala-L-Ala</KM>
        <text>kcat is 43 sec(-1) for epimerization of D-Ala-D-Ala. kcat is 58 sec(-1) for epimerization of D-Ala-L-Ala. kcat is 19 sec(-1) for epimerization of D-Ala-L-Val. kcat is 37 sec(-1) for epimerization of L-Ala-L-Ala.</text>
    </kinetics>
</comment>
<comment type="miscellaneous">
    <text>Part of a large, functionally divergent protein family. Protein modeling and substrate docking were used to predict the substrate specificity, prior to biochemical analysis.</text>
</comment>
<comment type="similarity">
    <text evidence="2">Belongs to the mandelate racemase/muconate lactonizing enzyme family.</text>
</comment>
<keyword id="KW-0002">3D-structure</keyword>
<keyword id="KW-0413">Isomerase</keyword>
<keyword id="KW-0460">Magnesium</keyword>
<keyword id="KW-0479">Metal-binding</keyword>
<keyword id="KW-1185">Reference proteome</keyword>
<name>AAEP_CYTH3</name>
<sequence length="368" mass="40311">MIITQVELYKSPVKLKEPFKISLGILTHANNVIVRIHTASGHIGYGECSPFMTIHGESMDTAFIVGQYLAKGLIGTSCLDIVSNSLLMDAIIYGNSCIKSAFNIALYDLAAQHAGLPLYAFLGGKKDKIIQTDYTVSIDEPHKMAADAVQIKKNGFEIIKVKVGGSKELDVERIRMIREAAGDSITLRIDANQGWSVETAIETLTLLEPYNIQHCEEPVSRNLYTALPKIRQACRIPIMADESCCNSFDAERLIQIQACDSFNLKLSKSAGITNALNIIRLAEQAHMPVQVGGFLESRLGFTAAAHVALVSKTICYYDFDTPLMFEADPVRGGIVYQQRGIIEVPETAGLGAGYQKDYLSGLEKICIN</sequence>
<gene>
    <name type="primary">tfdD</name>
    <name type="ordered locus">CHU_2140</name>
</gene>
<organism>
    <name type="scientific">Cytophaga hutchinsonii (strain ATCC 33406 / DSM 1761 / CIP 103989 / NBRC 15051 / NCIMB 9469 / D465)</name>
    <dbReference type="NCBI Taxonomy" id="269798"/>
    <lineage>
        <taxon>Bacteria</taxon>
        <taxon>Pseudomonadati</taxon>
        <taxon>Bacteroidota</taxon>
        <taxon>Cytophagia</taxon>
        <taxon>Cytophagales</taxon>
        <taxon>Cytophagaceae</taxon>
        <taxon>Cytophaga</taxon>
    </lineage>
</organism>
<proteinExistence type="evidence at protein level"/>
<protein>
    <recommendedName>
        <fullName>D-Ala-D/L-Ala epimerase</fullName>
        <ecNumber>5.1.1.-</ecNumber>
    </recommendedName>
</protein>
<evidence type="ECO:0000269" key="1">
    <source>
    </source>
</evidence>
<evidence type="ECO:0000305" key="2"/>
<evidence type="ECO:0007829" key="3">
    <source>
        <dbReference type="PDB" id="3Q45"/>
    </source>
</evidence>
<evidence type="ECO:0007829" key="4">
    <source>
        <dbReference type="PDB" id="3Q4D"/>
    </source>
</evidence>
<dbReference type="EC" id="5.1.1.-"/>
<dbReference type="EMBL" id="CP000383">
    <property type="protein sequence ID" value="ABG59403.1"/>
    <property type="molecule type" value="Genomic_DNA"/>
</dbReference>
<dbReference type="RefSeq" id="WP_011585520.1">
    <property type="nucleotide sequence ID" value="NC_008255.1"/>
</dbReference>
<dbReference type="PDB" id="3Q45">
    <property type="method" value="X-ray"/>
    <property type="resolution" value="3.00 A"/>
    <property type="chains" value="A/B/C/D/E/F/G/H/I=1-368"/>
</dbReference>
<dbReference type="PDB" id="3Q4D">
    <property type="method" value="X-ray"/>
    <property type="resolution" value="3.00 A"/>
    <property type="chains" value="A/B/C/D/E/F/G/H/I=1-368"/>
</dbReference>
<dbReference type="PDBsum" id="3Q45"/>
<dbReference type="PDBsum" id="3Q4D"/>
<dbReference type="SMR" id="Q11T61"/>
<dbReference type="STRING" id="269798.CHU_2140"/>
<dbReference type="KEGG" id="chu:CHU_2140"/>
<dbReference type="eggNOG" id="COG4948">
    <property type="taxonomic scope" value="Bacteria"/>
</dbReference>
<dbReference type="HOGENOM" id="CLU_030273_4_0_10"/>
<dbReference type="OrthoDB" id="9775391at2"/>
<dbReference type="EvolutionaryTrace" id="Q11T61"/>
<dbReference type="Proteomes" id="UP000001822">
    <property type="component" value="Chromosome"/>
</dbReference>
<dbReference type="GO" id="GO:0000287">
    <property type="term" value="F:magnesium ion binding"/>
    <property type="evidence" value="ECO:0000314"/>
    <property type="project" value="UniProtKB"/>
</dbReference>
<dbReference type="GO" id="GO:0016854">
    <property type="term" value="F:racemase and epimerase activity"/>
    <property type="evidence" value="ECO:0000314"/>
    <property type="project" value="UniProtKB"/>
</dbReference>
<dbReference type="GO" id="GO:0016855">
    <property type="term" value="F:racemase and epimerase activity, acting on amino acids and derivatives"/>
    <property type="evidence" value="ECO:0007669"/>
    <property type="project" value="InterPro"/>
</dbReference>
<dbReference type="GO" id="GO:0006518">
    <property type="term" value="P:peptide metabolic process"/>
    <property type="evidence" value="ECO:0000314"/>
    <property type="project" value="UniProtKB"/>
</dbReference>
<dbReference type="CDD" id="cd03319">
    <property type="entry name" value="L-Ala-DL-Glu_epimerase"/>
    <property type="match status" value="1"/>
</dbReference>
<dbReference type="FunFam" id="3.30.390.10:FF:000009">
    <property type="entry name" value="Hydrophobic dipeptide epimerase"/>
    <property type="match status" value="1"/>
</dbReference>
<dbReference type="Gene3D" id="3.20.20.120">
    <property type="entry name" value="Enolase-like C-terminal domain"/>
    <property type="match status" value="1"/>
</dbReference>
<dbReference type="Gene3D" id="3.30.390.10">
    <property type="entry name" value="Enolase-like, N-terminal domain"/>
    <property type="match status" value="1"/>
</dbReference>
<dbReference type="InterPro" id="IPR034603">
    <property type="entry name" value="Dipeptide_epimerase"/>
</dbReference>
<dbReference type="InterPro" id="IPR036849">
    <property type="entry name" value="Enolase-like_C_sf"/>
</dbReference>
<dbReference type="InterPro" id="IPR029017">
    <property type="entry name" value="Enolase-like_N"/>
</dbReference>
<dbReference type="InterPro" id="IPR029065">
    <property type="entry name" value="Enolase_C-like"/>
</dbReference>
<dbReference type="InterPro" id="IPR013342">
    <property type="entry name" value="Mandelate_racemase_C"/>
</dbReference>
<dbReference type="InterPro" id="IPR013341">
    <property type="entry name" value="Mandelate_racemase_N_dom"/>
</dbReference>
<dbReference type="PANTHER" id="PTHR48073:SF2">
    <property type="entry name" value="O-SUCCINYLBENZOATE SYNTHASE"/>
    <property type="match status" value="1"/>
</dbReference>
<dbReference type="PANTHER" id="PTHR48073">
    <property type="entry name" value="O-SUCCINYLBENZOATE SYNTHASE-RELATED"/>
    <property type="match status" value="1"/>
</dbReference>
<dbReference type="Pfam" id="PF13378">
    <property type="entry name" value="MR_MLE_C"/>
    <property type="match status" value="1"/>
</dbReference>
<dbReference type="Pfam" id="PF02746">
    <property type="entry name" value="MR_MLE_N"/>
    <property type="match status" value="1"/>
</dbReference>
<dbReference type="SFLD" id="SFLDS00001">
    <property type="entry name" value="Enolase"/>
    <property type="match status" value="1"/>
</dbReference>
<dbReference type="SFLD" id="SFLDF00009">
    <property type="entry name" value="o-succinylbenzoate_synthase"/>
    <property type="match status" value="1"/>
</dbReference>
<dbReference type="SMART" id="SM00922">
    <property type="entry name" value="MR_MLE"/>
    <property type="match status" value="1"/>
</dbReference>
<dbReference type="SUPFAM" id="SSF51604">
    <property type="entry name" value="Enolase C-terminal domain-like"/>
    <property type="match status" value="1"/>
</dbReference>
<dbReference type="SUPFAM" id="SSF54826">
    <property type="entry name" value="Enolase N-terminal domain-like"/>
    <property type="match status" value="1"/>
</dbReference>
<accession>Q11T61</accession>
<feature type="chain" id="PRO_0000429644" description="D-Ala-D/L-Ala epimerase">
    <location>
        <begin position="1"/>
        <end position="368"/>
    </location>
</feature>
<feature type="binding site">
    <location>
        <position position="135"/>
    </location>
    <ligand>
        <name>substrate</name>
    </ligand>
</feature>
<feature type="binding site">
    <location>
        <begin position="160"/>
        <end position="162"/>
    </location>
    <ligand>
        <name>substrate</name>
    </ligand>
</feature>
<feature type="binding site">
    <location>
        <position position="190"/>
    </location>
    <ligand>
        <name>Mg(2+)</name>
        <dbReference type="ChEBI" id="CHEBI:18420"/>
    </ligand>
</feature>
<feature type="binding site">
    <location>
        <position position="216"/>
    </location>
    <ligand>
        <name>Mg(2+)</name>
        <dbReference type="ChEBI" id="CHEBI:18420"/>
    </ligand>
</feature>
<feature type="binding site">
    <location>
        <position position="241"/>
    </location>
    <ligand>
        <name>Mg(2+)</name>
        <dbReference type="ChEBI" id="CHEBI:18420"/>
    </ligand>
</feature>
<feature type="binding site">
    <location>
        <position position="265"/>
    </location>
    <ligand>
        <name>substrate</name>
    </ligand>
</feature>
<feature type="binding site">
    <location>
        <begin position="318"/>
        <end position="320"/>
    </location>
    <ligand>
        <name>substrate</name>
    </ligand>
</feature>
<feature type="strand" evidence="3">
    <location>
        <begin position="2"/>
        <end position="21"/>
    </location>
</feature>
<feature type="strand" evidence="3">
    <location>
        <begin position="24"/>
        <end position="38"/>
    </location>
</feature>
<feature type="strand" evidence="3">
    <location>
        <begin position="43"/>
        <end position="48"/>
    </location>
</feature>
<feature type="helix" evidence="3">
    <location>
        <begin position="52"/>
        <end position="55"/>
    </location>
</feature>
<feature type="helix" evidence="3">
    <location>
        <begin position="59"/>
        <end position="73"/>
    </location>
</feature>
<feature type="helix" evidence="3">
    <location>
        <begin position="81"/>
        <end position="91"/>
    </location>
</feature>
<feature type="helix" evidence="3">
    <location>
        <begin position="96"/>
        <end position="114"/>
    </location>
</feature>
<feature type="helix" evidence="3">
    <location>
        <begin position="118"/>
        <end position="121"/>
    </location>
</feature>
<feature type="strand" evidence="3">
    <location>
        <begin position="130"/>
        <end position="132"/>
    </location>
</feature>
<feature type="strand" evidence="3">
    <location>
        <begin position="134"/>
        <end position="136"/>
    </location>
</feature>
<feature type="helix" evidence="3">
    <location>
        <begin position="141"/>
        <end position="153"/>
    </location>
</feature>
<feature type="strand" evidence="3">
    <location>
        <begin position="157"/>
        <end position="162"/>
    </location>
</feature>
<feature type="helix" evidence="3">
    <location>
        <begin position="167"/>
        <end position="181"/>
    </location>
</feature>
<feature type="strand" evidence="3">
    <location>
        <begin position="183"/>
        <end position="190"/>
    </location>
</feature>
<feature type="helix" evidence="3">
    <location>
        <begin position="197"/>
        <end position="207"/>
    </location>
</feature>
<feature type="helix" evidence="3">
    <location>
        <begin position="208"/>
        <end position="210"/>
    </location>
</feature>
<feature type="strand" evidence="4">
    <location>
        <begin position="212"/>
        <end position="216"/>
    </location>
</feature>
<feature type="helix" evidence="3">
    <location>
        <begin position="221"/>
        <end position="226"/>
    </location>
</feature>
<feature type="helix" evidence="3">
    <location>
        <begin position="227"/>
        <end position="232"/>
    </location>
</feature>
<feature type="strand" evidence="3">
    <location>
        <begin position="238"/>
        <end position="241"/>
    </location>
</feature>
<feature type="helix" evidence="3">
    <location>
        <begin position="247"/>
        <end position="255"/>
    </location>
</feature>
<feature type="strand" evidence="3">
    <location>
        <begin position="260"/>
        <end position="264"/>
    </location>
</feature>
<feature type="turn" evidence="3">
    <location>
        <begin position="266"/>
        <end position="270"/>
    </location>
</feature>
<feature type="helix" evidence="3">
    <location>
        <begin position="272"/>
        <end position="284"/>
    </location>
</feature>
<feature type="strand" evidence="3">
    <location>
        <begin position="289"/>
        <end position="291"/>
    </location>
</feature>
<feature type="helix" evidence="3">
    <location>
        <begin position="298"/>
        <end position="308"/>
    </location>
</feature>
<feature type="strand" evidence="3">
    <location>
        <begin position="314"/>
        <end position="317"/>
    </location>
</feature>
<feature type="helix" evidence="3">
    <location>
        <begin position="321"/>
        <end position="324"/>
    </location>
</feature>
<feature type="strand" evidence="3">
    <location>
        <begin position="325"/>
        <end position="327"/>
    </location>
</feature>
<feature type="strand" evidence="3">
    <location>
        <begin position="330"/>
        <end position="333"/>
    </location>
</feature>
<feature type="helix" evidence="3">
    <location>
        <begin position="338"/>
        <end position="340"/>
    </location>
</feature>
<feature type="strand" evidence="3">
    <location>
        <begin position="341"/>
        <end position="343"/>
    </location>
</feature>
<feature type="strand" evidence="3">
    <location>
        <begin position="347"/>
        <end position="350"/>
    </location>
</feature>
<feature type="strand" evidence="3">
    <location>
        <begin position="352"/>
        <end position="354"/>
    </location>
</feature>
<feature type="turn" evidence="3">
    <location>
        <begin position="356"/>
        <end position="358"/>
    </location>
</feature>
<feature type="helix" evidence="3">
    <location>
        <begin position="359"/>
        <end position="361"/>
    </location>
</feature>
<feature type="strand" evidence="3">
    <location>
        <begin position="362"/>
        <end position="367"/>
    </location>
</feature>